<name>SYH_STUS1</name>
<feature type="chain" id="PRO_1000016424" description="Histidine--tRNA ligase">
    <location>
        <begin position="1"/>
        <end position="429"/>
    </location>
</feature>
<sequence length="429" mass="47449">MSKSLQAIRGMNDILPAQTPTWRYLESTFAQLLESYGYSEIRLPILEFTDLFARGIGEGTDVVDKEMYTFLDRNEESLTLRPEGTAGCVRAVLEHGMTGGGQVQKLWYTGPMFRYEKPQKGRYRQFHQIGVEVFNQPGPDIDAELIVLTARLWKQLGLADAVTLQLNSLGSSEARARYRDALVAYLQQRFEQLDEDSQRRLTTNPLRILDSKNAQTQALLTDAPTLHDYLDEESRAHFEGLKARLDAVGIAYEINPKLVRGLDYYGRTVFEWVTDKLGAQGTVCAGGRYDGLVSQFGGKPTPGVGFAMGVERLVLLLETLGLVPETLNPAPHAYICAFGEAAELAALALAERLRDELPGLRLLVNAGGGSFKSQFKKADKSGARYALILGDDELAGRVVGCKPLRDDSEQQSIAWDALPERLAACLEQV</sequence>
<keyword id="KW-0030">Aminoacyl-tRNA synthetase</keyword>
<keyword id="KW-0067">ATP-binding</keyword>
<keyword id="KW-0963">Cytoplasm</keyword>
<keyword id="KW-0436">Ligase</keyword>
<keyword id="KW-0547">Nucleotide-binding</keyword>
<keyword id="KW-0648">Protein biosynthesis</keyword>
<keyword id="KW-1185">Reference proteome</keyword>
<dbReference type="EC" id="6.1.1.21" evidence="1"/>
<dbReference type="EMBL" id="CP000304">
    <property type="protein sequence ID" value="ABP80671.1"/>
    <property type="molecule type" value="Genomic_DNA"/>
</dbReference>
<dbReference type="RefSeq" id="WP_011914125.1">
    <property type="nucleotide sequence ID" value="NC_009434.1"/>
</dbReference>
<dbReference type="SMR" id="A4VNX0"/>
<dbReference type="KEGG" id="psa:PST_3030"/>
<dbReference type="eggNOG" id="COG0124">
    <property type="taxonomic scope" value="Bacteria"/>
</dbReference>
<dbReference type="HOGENOM" id="CLU_025113_1_0_6"/>
<dbReference type="Proteomes" id="UP000000233">
    <property type="component" value="Chromosome"/>
</dbReference>
<dbReference type="GO" id="GO:0005737">
    <property type="term" value="C:cytoplasm"/>
    <property type="evidence" value="ECO:0007669"/>
    <property type="project" value="UniProtKB-SubCell"/>
</dbReference>
<dbReference type="GO" id="GO:0005524">
    <property type="term" value="F:ATP binding"/>
    <property type="evidence" value="ECO:0007669"/>
    <property type="project" value="UniProtKB-UniRule"/>
</dbReference>
<dbReference type="GO" id="GO:0004821">
    <property type="term" value="F:histidine-tRNA ligase activity"/>
    <property type="evidence" value="ECO:0007669"/>
    <property type="project" value="UniProtKB-UniRule"/>
</dbReference>
<dbReference type="GO" id="GO:0006427">
    <property type="term" value="P:histidyl-tRNA aminoacylation"/>
    <property type="evidence" value="ECO:0007669"/>
    <property type="project" value="UniProtKB-UniRule"/>
</dbReference>
<dbReference type="CDD" id="cd00773">
    <property type="entry name" value="HisRS-like_core"/>
    <property type="match status" value="1"/>
</dbReference>
<dbReference type="FunFam" id="3.30.930.10:FF:000005">
    <property type="entry name" value="Histidine--tRNA ligase"/>
    <property type="match status" value="1"/>
</dbReference>
<dbReference type="Gene3D" id="3.40.50.800">
    <property type="entry name" value="Anticodon-binding domain"/>
    <property type="match status" value="1"/>
</dbReference>
<dbReference type="Gene3D" id="3.30.930.10">
    <property type="entry name" value="Bira Bifunctional Protein, Domain 2"/>
    <property type="match status" value="1"/>
</dbReference>
<dbReference type="HAMAP" id="MF_00127">
    <property type="entry name" value="His_tRNA_synth"/>
    <property type="match status" value="1"/>
</dbReference>
<dbReference type="InterPro" id="IPR006195">
    <property type="entry name" value="aa-tRNA-synth_II"/>
</dbReference>
<dbReference type="InterPro" id="IPR045864">
    <property type="entry name" value="aa-tRNA-synth_II/BPL/LPL"/>
</dbReference>
<dbReference type="InterPro" id="IPR004154">
    <property type="entry name" value="Anticodon-bd"/>
</dbReference>
<dbReference type="InterPro" id="IPR036621">
    <property type="entry name" value="Anticodon-bd_dom_sf"/>
</dbReference>
<dbReference type="InterPro" id="IPR015807">
    <property type="entry name" value="His-tRNA-ligase"/>
</dbReference>
<dbReference type="InterPro" id="IPR041715">
    <property type="entry name" value="HisRS-like_core"/>
</dbReference>
<dbReference type="InterPro" id="IPR004516">
    <property type="entry name" value="HisRS/HisZ"/>
</dbReference>
<dbReference type="NCBIfam" id="TIGR00442">
    <property type="entry name" value="hisS"/>
    <property type="match status" value="1"/>
</dbReference>
<dbReference type="PANTHER" id="PTHR43707:SF1">
    <property type="entry name" value="HISTIDINE--TRNA LIGASE, MITOCHONDRIAL-RELATED"/>
    <property type="match status" value="1"/>
</dbReference>
<dbReference type="PANTHER" id="PTHR43707">
    <property type="entry name" value="HISTIDYL-TRNA SYNTHETASE"/>
    <property type="match status" value="1"/>
</dbReference>
<dbReference type="Pfam" id="PF03129">
    <property type="entry name" value="HGTP_anticodon"/>
    <property type="match status" value="1"/>
</dbReference>
<dbReference type="Pfam" id="PF13393">
    <property type="entry name" value="tRNA-synt_His"/>
    <property type="match status" value="1"/>
</dbReference>
<dbReference type="PIRSF" id="PIRSF001549">
    <property type="entry name" value="His-tRNA_synth"/>
    <property type="match status" value="1"/>
</dbReference>
<dbReference type="SUPFAM" id="SSF52954">
    <property type="entry name" value="Class II aaRS ABD-related"/>
    <property type="match status" value="1"/>
</dbReference>
<dbReference type="SUPFAM" id="SSF55681">
    <property type="entry name" value="Class II aaRS and biotin synthetases"/>
    <property type="match status" value="1"/>
</dbReference>
<dbReference type="PROSITE" id="PS50862">
    <property type="entry name" value="AA_TRNA_LIGASE_II"/>
    <property type="match status" value="1"/>
</dbReference>
<organism>
    <name type="scientific">Stutzerimonas stutzeri (strain A1501)</name>
    <name type="common">Pseudomonas stutzeri</name>
    <dbReference type="NCBI Taxonomy" id="379731"/>
    <lineage>
        <taxon>Bacteria</taxon>
        <taxon>Pseudomonadati</taxon>
        <taxon>Pseudomonadota</taxon>
        <taxon>Gammaproteobacteria</taxon>
        <taxon>Pseudomonadales</taxon>
        <taxon>Pseudomonadaceae</taxon>
        <taxon>Stutzerimonas</taxon>
    </lineage>
</organism>
<gene>
    <name evidence="1" type="primary">hisS</name>
    <name type="ordered locus">PST_3030</name>
</gene>
<reference key="1">
    <citation type="journal article" date="2008" name="Proc. Natl. Acad. Sci. U.S.A.">
        <title>Nitrogen fixation island and rhizosphere competence traits in the genome of root-associated Pseudomonas stutzeri A1501.</title>
        <authorList>
            <person name="Yan Y."/>
            <person name="Yang J."/>
            <person name="Dou Y."/>
            <person name="Chen M."/>
            <person name="Ping S."/>
            <person name="Peng J."/>
            <person name="Lu W."/>
            <person name="Zhang W."/>
            <person name="Yao Z."/>
            <person name="Li H."/>
            <person name="Liu W."/>
            <person name="He S."/>
            <person name="Geng L."/>
            <person name="Zhang X."/>
            <person name="Yang F."/>
            <person name="Yu H."/>
            <person name="Zhan Y."/>
            <person name="Li D."/>
            <person name="Lin Z."/>
            <person name="Wang Y."/>
            <person name="Elmerich C."/>
            <person name="Lin M."/>
            <person name="Jin Q."/>
        </authorList>
    </citation>
    <scope>NUCLEOTIDE SEQUENCE [LARGE SCALE GENOMIC DNA]</scope>
    <source>
        <strain>A1501</strain>
    </source>
</reference>
<comment type="catalytic activity">
    <reaction evidence="1">
        <text>tRNA(His) + L-histidine + ATP = L-histidyl-tRNA(His) + AMP + diphosphate + H(+)</text>
        <dbReference type="Rhea" id="RHEA:17313"/>
        <dbReference type="Rhea" id="RHEA-COMP:9665"/>
        <dbReference type="Rhea" id="RHEA-COMP:9689"/>
        <dbReference type="ChEBI" id="CHEBI:15378"/>
        <dbReference type="ChEBI" id="CHEBI:30616"/>
        <dbReference type="ChEBI" id="CHEBI:33019"/>
        <dbReference type="ChEBI" id="CHEBI:57595"/>
        <dbReference type="ChEBI" id="CHEBI:78442"/>
        <dbReference type="ChEBI" id="CHEBI:78527"/>
        <dbReference type="ChEBI" id="CHEBI:456215"/>
        <dbReference type="EC" id="6.1.1.21"/>
    </reaction>
</comment>
<comment type="subunit">
    <text evidence="1">Homodimer.</text>
</comment>
<comment type="subcellular location">
    <subcellularLocation>
        <location evidence="1">Cytoplasm</location>
    </subcellularLocation>
</comment>
<comment type="similarity">
    <text evidence="1">Belongs to the class-II aminoacyl-tRNA synthetase family.</text>
</comment>
<accession>A4VNX0</accession>
<evidence type="ECO:0000255" key="1">
    <source>
        <dbReference type="HAMAP-Rule" id="MF_00127"/>
    </source>
</evidence>
<proteinExistence type="inferred from homology"/>
<protein>
    <recommendedName>
        <fullName evidence="1">Histidine--tRNA ligase</fullName>
        <ecNumber evidence="1">6.1.1.21</ecNumber>
    </recommendedName>
    <alternativeName>
        <fullName evidence="1">Histidyl-tRNA synthetase</fullName>
        <shortName evidence="1">HisRS</shortName>
    </alternativeName>
</protein>